<proteinExistence type="inferred from homology"/>
<keyword id="KW-0093">Biotin biosynthesis</keyword>
<keyword id="KW-0663">Pyridoxal phosphate</keyword>
<keyword id="KW-1185">Reference proteome</keyword>
<keyword id="KW-0808">Transferase</keyword>
<sequence>MPLSNRRFNHKIKHALEARETQGLYRQRACLSRADQSVYHQGTSLLNFSSNDYLGLAQDPAILSAWQEGLTLFGAGSGASPLVTGFHSAHKALEDQLADWLGYDRALLFNSGFSANQAVLFTIPDKHDVLIQDKLNHASLMEAGLLSPATMRRFAHNDLSALTRLLHQTNDKFPSINPLVITEGVFSMDGDLSPLANISEQCSQHDAWLMVDDAHGCGVLGDKGRGSCDLAGVKADILIVTFGKAFGLSGAAVMCNNDTAEYLIQFARHFIYSTSMPPSQAHALSAACRLIQSDDWRREKLHDLGYLLFENVESSIQLVDTHTPIKPLIIGDSHKALSVSNALKAKGLWVSAIRPPTVPVNSARLRITLTAAHTEQDIKRLATTLNEVINDE</sequence>
<gene>
    <name evidence="1" type="primary">bioF</name>
    <name type="ordered locus">PBPRA2328</name>
</gene>
<dbReference type="EC" id="2.3.1.47" evidence="1"/>
<dbReference type="EMBL" id="CR378670">
    <property type="protein sequence ID" value="CAG20713.1"/>
    <property type="status" value="ALT_INIT"/>
    <property type="molecule type" value="Genomic_DNA"/>
</dbReference>
<dbReference type="RefSeq" id="WP_041394387.1">
    <property type="nucleotide sequence ID" value="NC_006370.1"/>
</dbReference>
<dbReference type="SMR" id="Q6LPR3"/>
<dbReference type="STRING" id="298386.PBPRA2328"/>
<dbReference type="KEGG" id="ppr:PBPRA2328"/>
<dbReference type="eggNOG" id="COG0156">
    <property type="taxonomic scope" value="Bacteria"/>
</dbReference>
<dbReference type="HOGENOM" id="CLU_015846_11_2_6"/>
<dbReference type="UniPathway" id="UPA00078"/>
<dbReference type="Proteomes" id="UP000000593">
    <property type="component" value="Chromosome 1"/>
</dbReference>
<dbReference type="GO" id="GO:0008710">
    <property type="term" value="F:8-amino-7-oxononanoate synthase activity"/>
    <property type="evidence" value="ECO:0007669"/>
    <property type="project" value="UniProtKB-UniRule"/>
</dbReference>
<dbReference type="GO" id="GO:0030170">
    <property type="term" value="F:pyridoxal phosphate binding"/>
    <property type="evidence" value="ECO:0007669"/>
    <property type="project" value="UniProtKB-UniRule"/>
</dbReference>
<dbReference type="GO" id="GO:0009102">
    <property type="term" value="P:biotin biosynthetic process"/>
    <property type="evidence" value="ECO:0007669"/>
    <property type="project" value="UniProtKB-UniRule"/>
</dbReference>
<dbReference type="CDD" id="cd06454">
    <property type="entry name" value="KBL_like"/>
    <property type="match status" value="1"/>
</dbReference>
<dbReference type="Gene3D" id="3.90.1150.10">
    <property type="entry name" value="Aspartate Aminotransferase, domain 1"/>
    <property type="match status" value="1"/>
</dbReference>
<dbReference type="Gene3D" id="3.40.640.10">
    <property type="entry name" value="Type I PLP-dependent aspartate aminotransferase-like (Major domain)"/>
    <property type="match status" value="1"/>
</dbReference>
<dbReference type="HAMAP" id="MF_01693">
    <property type="entry name" value="BioF_aminotrans_2"/>
    <property type="match status" value="1"/>
</dbReference>
<dbReference type="InterPro" id="IPR001917">
    <property type="entry name" value="Aminotrans_II_pyridoxalP_BS"/>
</dbReference>
<dbReference type="InterPro" id="IPR004839">
    <property type="entry name" value="Aminotransferase_I/II_large"/>
</dbReference>
<dbReference type="InterPro" id="IPR050087">
    <property type="entry name" value="AON_synthase_class-II"/>
</dbReference>
<dbReference type="InterPro" id="IPR004723">
    <property type="entry name" value="AONS_Archaea/Proteobacteria"/>
</dbReference>
<dbReference type="InterPro" id="IPR022834">
    <property type="entry name" value="AONS_Proteobacteria"/>
</dbReference>
<dbReference type="InterPro" id="IPR015424">
    <property type="entry name" value="PyrdxlP-dep_Trfase"/>
</dbReference>
<dbReference type="InterPro" id="IPR015421">
    <property type="entry name" value="PyrdxlP-dep_Trfase_major"/>
</dbReference>
<dbReference type="InterPro" id="IPR015422">
    <property type="entry name" value="PyrdxlP-dep_Trfase_small"/>
</dbReference>
<dbReference type="NCBIfam" id="TIGR00858">
    <property type="entry name" value="bioF"/>
    <property type="match status" value="1"/>
</dbReference>
<dbReference type="PANTHER" id="PTHR13693:SF100">
    <property type="entry name" value="8-AMINO-7-OXONONANOATE SYNTHASE"/>
    <property type="match status" value="1"/>
</dbReference>
<dbReference type="PANTHER" id="PTHR13693">
    <property type="entry name" value="CLASS II AMINOTRANSFERASE/8-AMINO-7-OXONONANOATE SYNTHASE"/>
    <property type="match status" value="1"/>
</dbReference>
<dbReference type="Pfam" id="PF00155">
    <property type="entry name" value="Aminotran_1_2"/>
    <property type="match status" value="1"/>
</dbReference>
<dbReference type="SUPFAM" id="SSF53383">
    <property type="entry name" value="PLP-dependent transferases"/>
    <property type="match status" value="1"/>
</dbReference>
<dbReference type="PROSITE" id="PS00599">
    <property type="entry name" value="AA_TRANSFER_CLASS_2"/>
    <property type="match status" value="1"/>
</dbReference>
<feature type="chain" id="PRO_0000381066" description="8-amino-7-oxononanoate synthase">
    <location>
        <begin position="1"/>
        <end position="392"/>
    </location>
</feature>
<feature type="binding site" evidence="1">
    <location>
        <position position="26"/>
    </location>
    <ligand>
        <name>substrate</name>
    </ligand>
</feature>
<feature type="binding site" evidence="1">
    <location>
        <begin position="112"/>
        <end position="113"/>
    </location>
    <ligand>
        <name>pyridoxal 5'-phosphate</name>
        <dbReference type="ChEBI" id="CHEBI:597326"/>
    </ligand>
</feature>
<feature type="binding site" evidence="1">
    <location>
        <position position="137"/>
    </location>
    <ligand>
        <name>substrate</name>
    </ligand>
</feature>
<feature type="binding site" evidence="1">
    <location>
        <position position="187"/>
    </location>
    <ligand>
        <name>pyridoxal 5'-phosphate</name>
        <dbReference type="ChEBI" id="CHEBI:597326"/>
    </ligand>
</feature>
<feature type="binding site" evidence="1">
    <location>
        <position position="215"/>
    </location>
    <ligand>
        <name>pyridoxal 5'-phosphate</name>
        <dbReference type="ChEBI" id="CHEBI:597326"/>
    </ligand>
</feature>
<feature type="binding site" evidence="1">
    <location>
        <position position="241"/>
    </location>
    <ligand>
        <name>pyridoxal 5'-phosphate</name>
        <dbReference type="ChEBI" id="CHEBI:597326"/>
    </ligand>
</feature>
<feature type="binding site" evidence="1">
    <location>
        <position position="357"/>
    </location>
    <ligand>
        <name>substrate</name>
    </ligand>
</feature>
<feature type="modified residue" description="N6-(pyridoxal phosphate)lysine" evidence="1">
    <location>
        <position position="244"/>
    </location>
</feature>
<organism>
    <name type="scientific">Photobacterium profundum (strain SS9)</name>
    <dbReference type="NCBI Taxonomy" id="298386"/>
    <lineage>
        <taxon>Bacteria</taxon>
        <taxon>Pseudomonadati</taxon>
        <taxon>Pseudomonadota</taxon>
        <taxon>Gammaproteobacteria</taxon>
        <taxon>Vibrionales</taxon>
        <taxon>Vibrionaceae</taxon>
        <taxon>Photobacterium</taxon>
    </lineage>
</organism>
<name>BIOF_PHOPR</name>
<reference key="1">
    <citation type="journal article" date="2005" name="Science">
        <title>Life at depth: Photobacterium profundum genome sequence and expression analysis.</title>
        <authorList>
            <person name="Vezzi A."/>
            <person name="Campanaro S."/>
            <person name="D'Angelo M."/>
            <person name="Simonato F."/>
            <person name="Vitulo N."/>
            <person name="Lauro F.M."/>
            <person name="Cestaro A."/>
            <person name="Malacrida G."/>
            <person name="Simionati B."/>
            <person name="Cannata N."/>
            <person name="Romualdi C."/>
            <person name="Bartlett D.H."/>
            <person name="Valle G."/>
        </authorList>
    </citation>
    <scope>NUCLEOTIDE SEQUENCE [LARGE SCALE GENOMIC DNA]</scope>
    <source>
        <strain>ATCC BAA-1253 / SS9</strain>
    </source>
</reference>
<protein>
    <recommendedName>
        <fullName evidence="1">8-amino-7-oxononanoate synthase</fullName>
        <shortName evidence="1">AONS</shortName>
        <ecNumber evidence="1">2.3.1.47</ecNumber>
    </recommendedName>
    <alternativeName>
        <fullName evidence="1">7-keto-8-amino-pelargonic acid synthase</fullName>
        <shortName evidence="1">7-KAP synthase</shortName>
        <shortName evidence="1">KAPA synthase</shortName>
    </alternativeName>
    <alternativeName>
        <fullName evidence="1">8-amino-7-ketopelargonate synthase</fullName>
    </alternativeName>
</protein>
<evidence type="ECO:0000255" key="1">
    <source>
        <dbReference type="HAMAP-Rule" id="MF_01693"/>
    </source>
</evidence>
<evidence type="ECO:0000305" key="2"/>
<accession>Q6LPR3</accession>
<comment type="function">
    <text evidence="1">Catalyzes the decarboxylative condensation of pimeloyl-[acyl-carrier protein] and L-alanine to produce 8-amino-7-oxononanoate (AON), [acyl-carrier protein], and carbon dioxide.</text>
</comment>
<comment type="catalytic activity">
    <reaction evidence="1">
        <text>6-carboxyhexanoyl-[ACP] + L-alanine + H(+) = (8S)-8-amino-7-oxononanoate + holo-[ACP] + CO2</text>
        <dbReference type="Rhea" id="RHEA:42288"/>
        <dbReference type="Rhea" id="RHEA-COMP:9685"/>
        <dbReference type="Rhea" id="RHEA-COMP:9955"/>
        <dbReference type="ChEBI" id="CHEBI:15378"/>
        <dbReference type="ChEBI" id="CHEBI:16526"/>
        <dbReference type="ChEBI" id="CHEBI:57972"/>
        <dbReference type="ChEBI" id="CHEBI:64479"/>
        <dbReference type="ChEBI" id="CHEBI:78846"/>
        <dbReference type="ChEBI" id="CHEBI:149468"/>
        <dbReference type="EC" id="2.3.1.47"/>
    </reaction>
</comment>
<comment type="cofactor">
    <cofactor evidence="1">
        <name>pyridoxal 5'-phosphate</name>
        <dbReference type="ChEBI" id="CHEBI:597326"/>
    </cofactor>
</comment>
<comment type="pathway">
    <text evidence="1">Cofactor biosynthesis; biotin biosynthesis.</text>
</comment>
<comment type="subunit">
    <text evidence="1">Homodimer.</text>
</comment>
<comment type="similarity">
    <text evidence="1">Belongs to the class-II pyridoxal-phosphate-dependent aminotransferase family. BioF subfamily.</text>
</comment>
<comment type="sequence caution" evidence="2">
    <conflict type="erroneous initiation">
        <sequence resource="EMBL-CDS" id="CAG20713"/>
    </conflict>
</comment>